<proteinExistence type="evidence at protein level"/>
<protein>
    <recommendedName>
        <fullName evidence="1 6">Tyrosine recombinase XerH</fullName>
    </recommendedName>
</protein>
<reference key="1">
    <citation type="journal article" date="2000" name="Nature">
        <title>The genome sequence of the food-borne pathogen Campylobacter jejuni reveals hypervariable sequences.</title>
        <authorList>
            <person name="Parkhill J."/>
            <person name="Wren B.W."/>
            <person name="Mungall K.L."/>
            <person name="Ketley J.M."/>
            <person name="Churcher C.M."/>
            <person name="Basham D."/>
            <person name="Chillingworth T."/>
            <person name="Davies R.M."/>
            <person name="Feltwell T."/>
            <person name="Holroyd S."/>
            <person name="Jagels K."/>
            <person name="Karlyshev A.V."/>
            <person name="Moule S."/>
            <person name="Pallen M.J."/>
            <person name="Penn C.W."/>
            <person name="Quail M.A."/>
            <person name="Rajandream M.A."/>
            <person name="Rutherford K.M."/>
            <person name="van Vliet A.H.M."/>
            <person name="Whitehead S."/>
            <person name="Barrell B.G."/>
        </authorList>
    </citation>
    <scope>NUCLEOTIDE SEQUENCE [LARGE SCALE GENOMIC DNA]</scope>
    <source>
        <strain>ATCC 700819 / NCTC 11168</strain>
    </source>
</reference>
<reference key="2">
    <citation type="journal article" date="2013" name="Mol. Genet. Genomics">
        <title>The Xer/dif site-specific recombination system of Campylobacter jejuni.</title>
        <authorList>
            <person name="Leroux M."/>
            <person name="Rezoug Z."/>
            <person name="Szatmari G."/>
        </authorList>
    </citation>
    <scope>FUNCTION</scope>
    <scope>DNA-BINDING</scope>
    <scope>ACTIVITY REGULATION</scope>
    <scope>MUTAGENESIS OF TYR-333</scope>
    <source>
        <strain>RM1221</strain>
    </source>
</reference>
<name>XERH_CAMJE</name>
<keyword id="KW-0131">Cell cycle</keyword>
<keyword id="KW-0132">Cell division</keyword>
<keyword id="KW-0963">Cytoplasm</keyword>
<keyword id="KW-0229">DNA integration</keyword>
<keyword id="KW-0233">DNA recombination</keyword>
<keyword id="KW-0238">DNA-binding</keyword>
<keyword id="KW-1185">Reference proteome</keyword>
<sequence>MKYPLDCEENFEKSFLFWLAKYVKFKLNSLSNKELKNPQALAEVNFALTKGVKNIDELDALAKKARNAGLSGVNTYFNPLKKVFEYLNFYKLYSLKQIDEELIVEVLASITGALSDASKKNYRIAVINFFDFLDKQNEEDEKAHIFDINLKNWAGIAGSKGVKLPEFMSKEELKKFLDAIENADFKNNTIRNKLIIKIIIFTGIRVSEAINIKMGDISEENDLYIIRIRAKGNKYRVVMIKKELIYDLLKNVSINYISKDALLFVNKKGTPLTQSYVSRIVEQLLFRAGIRKQKNGAHMLRHTFATLLYKKQKDLVLVQEALGHASLNTSRIYTHFDNDKLKLAAQVAKELSDS</sequence>
<feature type="chain" id="PRO_0000435725" description="Tyrosine recombinase XerH">
    <location>
        <begin position="1"/>
        <end position="354"/>
    </location>
</feature>
<feature type="domain" description="Core-binding (CB)" evidence="3">
    <location>
        <begin position="48"/>
        <end position="134"/>
    </location>
</feature>
<feature type="domain" description="Tyr recombinase" evidence="2">
    <location>
        <begin position="163"/>
        <end position="346"/>
    </location>
</feature>
<feature type="active site" evidence="2">
    <location>
        <position position="205"/>
    </location>
</feature>
<feature type="active site" evidence="2">
    <location>
        <position position="231"/>
    </location>
</feature>
<feature type="active site" evidence="2">
    <location>
        <position position="298"/>
    </location>
</feature>
<feature type="active site" evidence="2">
    <location>
        <position position="301"/>
    </location>
</feature>
<feature type="active site" evidence="2">
    <location>
        <position position="324"/>
    </location>
</feature>
<feature type="active site" description="O-(3'-phospho-DNA)-tyrosine intermediate" evidence="2">
    <location>
        <position position="333"/>
    </location>
</feature>
<feature type="mutagenesis site" description="Lack of activity." evidence="4">
    <original>Y</original>
    <variation>F</variation>
    <location>
        <position position="333"/>
    </location>
</feature>
<accession>Q0PA27</accession>
<gene>
    <name evidence="1 5" type="primary">xerH</name>
    <name evidence="7" type="synonym">xerD</name>
    <name evidence="7" type="ordered locus">Cj0863c</name>
</gene>
<dbReference type="EMBL" id="AL111168">
    <property type="protein sequence ID" value="CAL34991.1"/>
    <property type="molecule type" value="Genomic_DNA"/>
</dbReference>
<dbReference type="PIR" id="G81359">
    <property type="entry name" value="G81359"/>
</dbReference>
<dbReference type="RefSeq" id="WP_002852607.1">
    <property type="nucleotide sequence ID" value="NZ_SZUC01000001.1"/>
</dbReference>
<dbReference type="RefSeq" id="YP_002344270.1">
    <property type="nucleotide sequence ID" value="NC_002163.1"/>
</dbReference>
<dbReference type="SMR" id="Q0PA27"/>
<dbReference type="IntAct" id="Q0PA27">
    <property type="interactions" value="12"/>
</dbReference>
<dbReference type="STRING" id="192222.Cj0863c"/>
<dbReference type="PaxDb" id="192222-Cj0863c"/>
<dbReference type="EnsemblBacteria" id="CAL34991">
    <property type="protein sequence ID" value="CAL34991"/>
    <property type="gene ID" value="Cj0863c"/>
</dbReference>
<dbReference type="GeneID" id="905165"/>
<dbReference type="KEGG" id="cje:Cj0863c"/>
<dbReference type="PATRIC" id="fig|192222.6.peg.851"/>
<dbReference type="eggNOG" id="COG0582">
    <property type="taxonomic scope" value="Bacteria"/>
</dbReference>
<dbReference type="HOGENOM" id="CLU_027562_9_6_7"/>
<dbReference type="OrthoDB" id="9801717at2"/>
<dbReference type="Proteomes" id="UP000000799">
    <property type="component" value="Chromosome"/>
</dbReference>
<dbReference type="GO" id="GO:0005737">
    <property type="term" value="C:cytoplasm"/>
    <property type="evidence" value="ECO:0007669"/>
    <property type="project" value="UniProtKB-SubCell"/>
</dbReference>
<dbReference type="GO" id="GO:0003677">
    <property type="term" value="F:DNA binding"/>
    <property type="evidence" value="ECO:0007669"/>
    <property type="project" value="UniProtKB-KW"/>
</dbReference>
<dbReference type="GO" id="GO:0009037">
    <property type="term" value="F:tyrosine-based site-specific recombinase activity"/>
    <property type="evidence" value="ECO:0007669"/>
    <property type="project" value="UniProtKB-UniRule"/>
</dbReference>
<dbReference type="GO" id="GO:0051301">
    <property type="term" value="P:cell division"/>
    <property type="evidence" value="ECO:0007669"/>
    <property type="project" value="UniProtKB-KW"/>
</dbReference>
<dbReference type="GO" id="GO:0006310">
    <property type="term" value="P:DNA recombination"/>
    <property type="evidence" value="ECO:0007669"/>
    <property type="project" value="UniProtKB-UniRule"/>
</dbReference>
<dbReference type="Gene3D" id="1.10.443.10">
    <property type="entry name" value="Intergrase catalytic core"/>
    <property type="match status" value="1"/>
</dbReference>
<dbReference type="HAMAP" id="MF_02054">
    <property type="entry name" value="Recomb_XerH"/>
    <property type="match status" value="1"/>
</dbReference>
<dbReference type="InterPro" id="IPR044068">
    <property type="entry name" value="CB"/>
</dbReference>
<dbReference type="InterPro" id="IPR011010">
    <property type="entry name" value="DNA_brk_join_enz"/>
</dbReference>
<dbReference type="InterPro" id="IPR013762">
    <property type="entry name" value="Integrase-like_cat_sf"/>
</dbReference>
<dbReference type="InterPro" id="IPR002104">
    <property type="entry name" value="Integrase_catalytic"/>
</dbReference>
<dbReference type="InterPro" id="IPR050090">
    <property type="entry name" value="Tyrosine_recombinase_XerCD"/>
</dbReference>
<dbReference type="InterPro" id="IPR041308">
    <property type="entry name" value="Xer_N"/>
</dbReference>
<dbReference type="InterPro" id="IPR033683">
    <property type="entry name" value="XerH"/>
</dbReference>
<dbReference type="PANTHER" id="PTHR30349">
    <property type="entry name" value="PHAGE INTEGRASE-RELATED"/>
    <property type="match status" value="1"/>
</dbReference>
<dbReference type="PANTHER" id="PTHR30349:SF64">
    <property type="entry name" value="PROPHAGE INTEGRASE INTD-RELATED"/>
    <property type="match status" value="1"/>
</dbReference>
<dbReference type="Pfam" id="PF18644">
    <property type="entry name" value="Phage_int_SAM_6"/>
    <property type="match status" value="1"/>
</dbReference>
<dbReference type="Pfam" id="PF00589">
    <property type="entry name" value="Phage_integrase"/>
    <property type="match status" value="1"/>
</dbReference>
<dbReference type="SUPFAM" id="SSF56349">
    <property type="entry name" value="DNA breaking-rejoining enzymes"/>
    <property type="match status" value="1"/>
</dbReference>
<dbReference type="PROSITE" id="PS51900">
    <property type="entry name" value="CB"/>
    <property type="match status" value="1"/>
</dbReference>
<dbReference type="PROSITE" id="PS51898">
    <property type="entry name" value="TYR_RECOMBINASE"/>
    <property type="match status" value="1"/>
</dbReference>
<organism>
    <name type="scientific">Campylobacter jejuni subsp. jejuni serotype O:2 (strain ATCC 700819 / NCTC 11168)</name>
    <dbReference type="NCBI Taxonomy" id="192222"/>
    <lineage>
        <taxon>Bacteria</taxon>
        <taxon>Pseudomonadati</taxon>
        <taxon>Campylobacterota</taxon>
        <taxon>Epsilonproteobacteria</taxon>
        <taxon>Campylobacterales</taxon>
        <taxon>Campylobacteraceae</taxon>
        <taxon>Campylobacter</taxon>
    </lineage>
</organism>
<comment type="function">
    <text evidence="4">Site-specific tyrosine recombinase, which acts by catalyzing the cutting and rejoining of the recombining DNA molecules. Binds to the complete atypical dif motif (difH) site and to both halves separately.</text>
</comment>
<comment type="activity regulation">
    <text evidence="4">FtsK is required for efficient recombination.</text>
</comment>
<comment type="subcellular location">
    <subcellularLocation>
        <location evidence="1 6">Cytoplasm</location>
    </subcellularLocation>
</comment>
<comment type="similarity">
    <text evidence="1 6">Belongs to the 'phage' integrase family. XerH subfamily.</text>
</comment>
<evidence type="ECO:0000255" key="1">
    <source>
        <dbReference type="HAMAP-Rule" id="MF_02054"/>
    </source>
</evidence>
<evidence type="ECO:0000255" key="2">
    <source>
        <dbReference type="PROSITE-ProRule" id="PRU01246"/>
    </source>
</evidence>
<evidence type="ECO:0000255" key="3">
    <source>
        <dbReference type="PROSITE-ProRule" id="PRU01248"/>
    </source>
</evidence>
<evidence type="ECO:0000269" key="4">
    <source>
    </source>
</evidence>
<evidence type="ECO:0000303" key="5">
    <source>
    </source>
</evidence>
<evidence type="ECO:0000305" key="6"/>
<evidence type="ECO:0000312" key="7">
    <source>
        <dbReference type="EMBL" id="CAL34991.1"/>
    </source>
</evidence>